<feature type="chain" id="PRO_0000341895" description="2-succinyl-5-enolpyruvyl-6-hydroxy-3-cyclohexene-1-carboxylate synthase">
    <location>
        <begin position="1"/>
        <end position="567"/>
    </location>
</feature>
<keyword id="KW-0460">Magnesium</keyword>
<keyword id="KW-0464">Manganese</keyword>
<keyword id="KW-0474">Menaquinone biosynthesis</keyword>
<keyword id="KW-0479">Metal-binding</keyword>
<keyword id="KW-0786">Thiamine pyrophosphate</keyword>
<keyword id="KW-0808">Transferase</keyword>
<comment type="function">
    <text evidence="1">Catalyzes the thiamine diphosphate-dependent decarboxylation of 2-oxoglutarate and the subsequent addition of the resulting succinic semialdehyde-thiamine pyrophosphate anion to isochorismate to yield 2-succinyl-5-enolpyruvyl-6-hydroxy-3-cyclohexene-1-carboxylate (SEPHCHC).</text>
</comment>
<comment type="catalytic activity">
    <reaction evidence="1">
        <text>isochorismate + 2-oxoglutarate + H(+) = 5-enolpyruvoyl-6-hydroxy-2-succinyl-cyclohex-3-ene-1-carboxylate + CO2</text>
        <dbReference type="Rhea" id="RHEA:25593"/>
        <dbReference type="ChEBI" id="CHEBI:15378"/>
        <dbReference type="ChEBI" id="CHEBI:16526"/>
        <dbReference type="ChEBI" id="CHEBI:16810"/>
        <dbReference type="ChEBI" id="CHEBI:29780"/>
        <dbReference type="ChEBI" id="CHEBI:58818"/>
        <dbReference type="EC" id="2.2.1.9"/>
    </reaction>
</comment>
<comment type="cofactor">
    <cofactor evidence="1">
        <name>Mg(2+)</name>
        <dbReference type="ChEBI" id="CHEBI:18420"/>
    </cofactor>
    <cofactor evidence="1">
        <name>Mn(2+)</name>
        <dbReference type="ChEBI" id="CHEBI:29035"/>
    </cofactor>
</comment>
<comment type="cofactor">
    <cofactor evidence="1">
        <name>thiamine diphosphate</name>
        <dbReference type="ChEBI" id="CHEBI:58937"/>
    </cofactor>
    <text evidence="1">Binds 1 thiamine pyrophosphate per subunit.</text>
</comment>
<comment type="pathway">
    <text evidence="1">Quinol/quinone metabolism; 1,4-dihydroxy-2-naphthoate biosynthesis; 1,4-dihydroxy-2-naphthoate from chorismate: step 2/7.</text>
</comment>
<comment type="pathway">
    <text evidence="1">Quinol/quinone metabolism; menaquinone biosynthesis.</text>
</comment>
<comment type="subunit">
    <text evidence="1">Homodimer.</text>
</comment>
<comment type="similarity">
    <text evidence="1">Belongs to the TPP enzyme family. MenD subfamily.</text>
</comment>
<organism>
    <name type="scientific">Yersinia pseudotuberculosis serotype O:3 (strain YPIII)</name>
    <dbReference type="NCBI Taxonomy" id="502800"/>
    <lineage>
        <taxon>Bacteria</taxon>
        <taxon>Pseudomonadati</taxon>
        <taxon>Pseudomonadota</taxon>
        <taxon>Gammaproteobacteria</taxon>
        <taxon>Enterobacterales</taxon>
        <taxon>Yersiniaceae</taxon>
        <taxon>Yersinia</taxon>
    </lineage>
</organism>
<sequence length="567" mass="61872">MSTSVFNRRWAALLLEALTRHGVRHICIAPGSRSTPLTLAAAANPSLVCHTHFDERGLGHLALGLAKASTEPVAVIVTSGTAVANLYPALIEAGLTGERLILLTADRPPELIDCGANQAIRQQGLFASHPTLSVNLPRPTPDISARWLVSTLDSAMAQLQHGALHINCPFAEPLYGGDEQQYADWSASLGDWWQDCHPWLRQTCYPPSLYQPLAQQADWFFWRQKRGVVIAGRMGAEEGRQLTAWAAMLGWPLIGDVLSQTGQPLPCADLWLAHPRAQETLAQAQIVLQFGSSLTSKRLLQWQTACQPQEYWLVDSAPGRLDPANHRGRRIICPVGEWLSRHPAQRRTPWATELAVYSESAQAQVIETLSGQFSEAAVAHQLAELLPDNGQLFVGNSLIVRLIDALGQLPAGYPVYSNRGASGIDGLLSTAAGVQRATAKPTLAIVGDLSALYDLNALALLRQSSAPMVLLVINNNGGQIFSLLPTPEAERQRFYCMPQDVNFEHAAVMFSLGYARPNSWPQLREHVHQCWLRGGTTLIEVQVPPSQGAETLQQLVQQVTLIPQVAP</sequence>
<dbReference type="EC" id="2.2.1.9" evidence="1"/>
<dbReference type="EMBL" id="CP000950">
    <property type="protein sequence ID" value="ACA67882.1"/>
    <property type="molecule type" value="Genomic_DNA"/>
</dbReference>
<dbReference type="RefSeq" id="WP_011192656.1">
    <property type="nucleotide sequence ID" value="NZ_CP009792.1"/>
</dbReference>
<dbReference type="SMR" id="B1JH88"/>
<dbReference type="KEGG" id="ypy:YPK_1589"/>
<dbReference type="PATRIC" id="fig|502800.11.peg.2236"/>
<dbReference type="UniPathway" id="UPA00079"/>
<dbReference type="UniPathway" id="UPA01057">
    <property type="reaction ID" value="UER00164"/>
</dbReference>
<dbReference type="GO" id="GO:0070204">
    <property type="term" value="F:2-succinyl-5-enolpyruvyl-6-hydroxy-3-cyclohexene-1-carboxylic-acid synthase activity"/>
    <property type="evidence" value="ECO:0007669"/>
    <property type="project" value="UniProtKB-UniRule"/>
</dbReference>
<dbReference type="GO" id="GO:0000287">
    <property type="term" value="F:magnesium ion binding"/>
    <property type="evidence" value="ECO:0007669"/>
    <property type="project" value="UniProtKB-UniRule"/>
</dbReference>
<dbReference type="GO" id="GO:0030145">
    <property type="term" value="F:manganese ion binding"/>
    <property type="evidence" value="ECO:0007669"/>
    <property type="project" value="UniProtKB-UniRule"/>
</dbReference>
<dbReference type="GO" id="GO:0030976">
    <property type="term" value="F:thiamine pyrophosphate binding"/>
    <property type="evidence" value="ECO:0007669"/>
    <property type="project" value="UniProtKB-UniRule"/>
</dbReference>
<dbReference type="GO" id="GO:0009234">
    <property type="term" value="P:menaquinone biosynthetic process"/>
    <property type="evidence" value="ECO:0007669"/>
    <property type="project" value="UniProtKB-UniRule"/>
</dbReference>
<dbReference type="CDD" id="cd07037">
    <property type="entry name" value="TPP_PYR_MenD"/>
    <property type="match status" value="1"/>
</dbReference>
<dbReference type="CDD" id="cd02009">
    <property type="entry name" value="TPP_SHCHC_synthase"/>
    <property type="match status" value="1"/>
</dbReference>
<dbReference type="FunFam" id="3.40.50.970:FF:000029">
    <property type="entry name" value="2-succinyl-5-enolpyruvyl-6-hydroxy-3-cyclohexene-1-carboxylate synthase"/>
    <property type="match status" value="1"/>
</dbReference>
<dbReference type="Gene3D" id="3.40.50.970">
    <property type="match status" value="2"/>
</dbReference>
<dbReference type="Gene3D" id="3.40.50.1220">
    <property type="entry name" value="TPP-binding domain"/>
    <property type="match status" value="1"/>
</dbReference>
<dbReference type="HAMAP" id="MF_01659">
    <property type="entry name" value="MenD"/>
    <property type="match status" value="1"/>
</dbReference>
<dbReference type="InterPro" id="IPR004433">
    <property type="entry name" value="MenaQ_synth_MenD"/>
</dbReference>
<dbReference type="InterPro" id="IPR032264">
    <property type="entry name" value="MenD_middle"/>
</dbReference>
<dbReference type="InterPro" id="IPR029061">
    <property type="entry name" value="THDP-binding"/>
</dbReference>
<dbReference type="InterPro" id="IPR012001">
    <property type="entry name" value="Thiamin_PyroP_enz_TPP-bd_dom"/>
</dbReference>
<dbReference type="InterPro" id="IPR011766">
    <property type="entry name" value="TPP_enzyme_TPP-bd"/>
</dbReference>
<dbReference type="NCBIfam" id="TIGR00173">
    <property type="entry name" value="menD"/>
    <property type="match status" value="1"/>
</dbReference>
<dbReference type="PANTHER" id="PTHR42916">
    <property type="entry name" value="2-SUCCINYL-5-ENOLPYRUVYL-6-HYDROXY-3-CYCLOHEXENE-1-CARBOXYLATE SYNTHASE"/>
    <property type="match status" value="1"/>
</dbReference>
<dbReference type="PANTHER" id="PTHR42916:SF1">
    <property type="entry name" value="PROTEIN PHYLLO, CHLOROPLASTIC"/>
    <property type="match status" value="1"/>
</dbReference>
<dbReference type="Pfam" id="PF02775">
    <property type="entry name" value="TPP_enzyme_C"/>
    <property type="match status" value="1"/>
</dbReference>
<dbReference type="Pfam" id="PF16582">
    <property type="entry name" value="TPP_enzyme_M_2"/>
    <property type="match status" value="1"/>
</dbReference>
<dbReference type="Pfam" id="PF02776">
    <property type="entry name" value="TPP_enzyme_N"/>
    <property type="match status" value="1"/>
</dbReference>
<dbReference type="PIRSF" id="PIRSF004983">
    <property type="entry name" value="MenD"/>
    <property type="match status" value="1"/>
</dbReference>
<dbReference type="SUPFAM" id="SSF52518">
    <property type="entry name" value="Thiamin diphosphate-binding fold (THDP-binding)"/>
    <property type="match status" value="2"/>
</dbReference>
<accession>B1JH88</accession>
<protein>
    <recommendedName>
        <fullName evidence="1">2-succinyl-5-enolpyruvyl-6-hydroxy-3-cyclohexene-1-carboxylate synthase</fullName>
        <shortName evidence="1">SEPHCHC synthase</shortName>
        <ecNumber evidence="1">2.2.1.9</ecNumber>
    </recommendedName>
    <alternativeName>
        <fullName evidence="1">Menaquinone biosynthesis protein MenD</fullName>
    </alternativeName>
</protein>
<proteinExistence type="inferred from homology"/>
<gene>
    <name evidence="1" type="primary">menD</name>
    <name type="ordered locus">YPK_1589</name>
</gene>
<evidence type="ECO:0000255" key="1">
    <source>
        <dbReference type="HAMAP-Rule" id="MF_01659"/>
    </source>
</evidence>
<reference key="1">
    <citation type="submission" date="2008-02" db="EMBL/GenBank/DDBJ databases">
        <title>Complete sequence of Yersinia pseudotuberculosis YPIII.</title>
        <authorList>
            <consortium name="US DOE Joint Genome Institute"/>
            <person name="Copeland A."/>
            <person name="Lucas S."/>
            <person name="Lapidus A."/>
            <person name="Glavina del Rio T."/>
            <person name="Dalin E."/>
            <person name="Tice H."/>
            <person name="Bruce D."/>
            <person name="Goodwin L."/>
            <person name="Pitluck S."/>
            <person name="Munk A.C."/>
            <person name="Brettin T."/>
            <person name="Detter J.C."/>
            <person name="Han C."/>
            <person name="Tapia R."/>
            <person name="Schmutz J."/>
            <person name="Larimer F."/>
            <person name="Land M."/>
            <person name="Hauser L."/>
            <person name="Challacombe J.F."/>
            <person name="Green L."/>
            <person name="Lindler L.E."/>
            <person name="Nikolich M.P."/>
            <person name="Richardson P."/>
        </authorList>
    </citation>
    <scope>NUCLEOTIDE SEQUENCE [LARGE SCALE GENOMIC DNA]</scope>
    <source>
        <strain>YPIII</strain>
    </source>
</reference>
<name>MEND_YERPY</name>